<protein>
    <recommendedName>
        <fullName>Probable protein S-acyltransferase 7</fullName>
        <ecNumber>2.3.1.225</ecNumber>
    </recommendedName>
    <alternativeName>
        <fullName>Probable palmitoyltransferase At3g26935</fullName>
    </alternativeName>
    <alternativeName>
        <fullName>Zinc finger DHHC domain-containing protein At3g26935</fullName>
    </alternativeName>
</protein>
<evidence type="ECO:0000250" key="1"/>
<evidence type="ECO:0000250" key="2">
    <source>
        <dbReference type="UniProtKB" id="Q9M306"/>
    </source>
</evidence>
<evidence type="ECO:0000255" key="3"/>
<evidence type="ECO:0000255" key="4">
    <source>
        <dbReference type="PROSITE-ProRule" id="PRU00067"/>
    </source>
</evidence>
<evidence type="ECO:0000256" key="5">
    <source>
        <dbReference type="SAM" id="MobiDB-lite"/>
    </source>
</evidence>
<evidence type="ECO:0000269" key="6">
    <source ref="7"/>
</evidence>
<evidence type="ECO:0000305" key="7"/>
<evidence type="ECO:0007744" key="8">
    <source>
    </source>
</evidence>
<evidence type="ECO:0007744" key="9">
    <source>
    </source>
</evidence>
<evidence type="ECO:0007744" key="10">
    <source>
    </source>
</evidence>
<dbReference type="EC" id="2.3.1.225"/>
<dbReference type="EMBL" id="AP000602">
    <property type="protein sequence ID" value="BAB01189.1"/>
    <property type="status" value="ALT_SEQ"/>
    <property type="molecule type" value="Genomic_DNA"/>
</dbReference>
<dbReference type="EMBL" id="AB026649">
    <property type="protein sequence ID" value="BAB01189.1"/>
    <property type="status" value="JOINED"/>
    <property type="molecule type" value="Genomic_DNA"/>
</dbReference>
<dbReference type="EMBL" id="CP002686">
    <property type="protein sequence ID" value="AEE77247.1"/>
    <property type="molecule type" value="Genomic_DNA"/>
</dbReference>
<dbReference type="EMBL" id="AK228693">
    <property type="protein sequence ID" value="BAF00597.1"/>
    <property type="molecule type" value="mRNA"/>
</dbReference>
<dbReference type="RefSeq" id="NP_850638.1">
    <property type="nucleotide sequence ID" value="NM_180307.4"/>
</dbReference>
<dbReference type="SMR" id="Q0WQK2"/>
<dbReference type="BioGRID" id="7641">
    <property type="interactions" value="1"/>
</dbReference>
<dbReference type="FunCoup" id="Q0WQK2">
    <property type="interactions" value="3923"/>
</dbReference>
<dbReference type="STRING" id="3702.Q0WQK2"/>
<dbReference type="iPTMnet" id="Q0WQK2"/>
<dbReference type="PaxDb" id="3702-AT3G26935.1"/>
<dbReference type="ProteomicsDB" id="232324"/>
<dbReference type="EnsemblPlants" id="AT3G26935.1">
    <property type="protein sequence ID" value="AT3G26935.1"/>
    <property type="gene ID" value="AT3G26935"/>
</dbReference>
<dbReference type="GeneID" id="822311"/>
<dbReference type="Gramene" id="AT3G26935.1">
    <property type="protein sequence ID" value="AT3G26935.1"/>
    <property type="gene ID" value="AT3G26935"/>
</dbReference>
<dbReference type="KEGG" id="ath:AT3G26935"/>
<dbReference type="Araport" id="AT3G26935"/>
<dbReference type="TAIR" id="AT3G26935"/>
<dbReference type="eggNOG" id="KOG1311">
    <property type="taxonomic scope" value="Eukaryota"/>
</dbReference>
<dbReference type="HOGENOM" id="CLU_018741_2_2_1"/>
<dbReference type="InParanoid" id="Q0WQK2"/>
<dbReference type="OMA" id="MSEHGTN"/>
<dbReference type="OrthoDB" id="4096362at2759"/>
<dbReference type="PhylomeDB" id="Q0WQK2"/>
<dbReference type="BRENDA" id="2.3.1.225">
    <property type="organism ID" value="399"/>
</dbReference>
<dbReference type="PRO" id="PR:Q0WQK2"/>
<dbReference type="Proteomes" id="UP000006548">
    <property type="component" value="Chromosome 3"/>
</dbReference>
<dbReference type="ExpressionAtlas" id="Q0WQK2">
    <property type="expression patterns" value="baseline and differential"/>
</dbReference>
<dbReference type="GO" id="GO:0005829">
    <property type="term" value="C:cytosol"/>
    <property type="evidence" value="ECO:0007005"/>
    <property type="project" value="TAIR"/>
</dbReference>
<dbReference type="GO" id="GO:0005886">
    <property type="term" value="C:plasma membrane"/>
    <property type="evidence" value="ECO:0007005"/>
    <property type="project" value="TAIR"/>
</dbReference>
<dbReference type="GO" id="GO:0019706">
    <property type="term" value="F:protein-cysteine S-palmitoyltransferase activity"/>
    <property type="evidence" value="ECO:0007669"/>
    <property type="project" value="UniProtKB-EC"/>
</dbReference>
<dbReference type="InterPro" id="IPR001594">
    <property type="entry name" value="Palmitoyltrfase_DHHC"/>
</dbReference>
<dbReference type="InterPro" id="IPR039859">
    <property type="entry name" value="PFA4/ZDH16/20/ERF2-like"/>
</dbReference>
<dbReference type="PANTHER" id="PTHR22883:SF470">
    <property type="entry name" value="PROTEIN S-ACYLTRANSFERASE 7-RELATED"/>
    <property type="match status" value="1"/>
</dbReference>
<dbReference type="PANTHER" id="PTHR22883">
    <property type="entry name" value="ZINC FINGER DHHC DOMAIN CONTAINING PROTEIN"/>
    <property type="match status" value="1"/>
</dbReference>
<dbReference type="Pfam" id="PF01529">
    <property type="entry name" value="DHHC"/>
    <property type="match status" value="1"/>
</dbReference>
<dbReference type="PROSITE" id="PS50216">
    <property type="entry name" value="DHHC"/>
    <property type="match status" value="1"/>
</dbReference>
<proteinExistence type="evidence at protein level"/>
<organism>
    <name type="scientific">Arabidopsis thaliana</name>
    <name type="common">Mouse-ear cress</name>
    <dbReference type="NCBI Taxonomy" id="3702"/>
    <lineage>
        <taxon>Eukaryota</taxon>
        <taxon>Viridiplantae</taxon>
        <taxon>Streptophyta</taxon>
        <taxon>Embryophyta</taxon>
        <taxon>Tracheophyta</taxon>
        <taxon>Spermatophyta</taxon>
        <taxon>Magnoliopsida</taxon>
        <taxon>eudicotyledons</taxon>
        <taxon>Gunneridae</taxon>
        <taxon>Pentapetalae</taxon>
        <taxon>rosids</taxon>
        <taxon>malvids</taxon>
        <taxon>Brassicales</taxon>
        <taxon>Brassicaceae</taxon>
        <taxon>Camelineae</taxon>
        <taxon>Arabidopsis</taxon>
    </lineage>
</organism>
<comment type="function">
    <text evidence="1 6">Palmitoyl acyltransferase.</text>
</comment>
<comment type="catalytic activity">
    <reaction>
        <text>L-cysteinyl-[protein] + hexadecanoyl-CoA = S-hexadecanoyl-L-cysteinyl-[protein] + CoA</text>
        <dbReference type="Rhea" id="RHEA:36683"/>
        <dbReference type="Rhea" id="RHEA-COMP:10131"/>
        <dbReference type="Rhea" id="RHEA-COMP:11032"/>
        <dbReference type="ChEBI" id="CHEBI:29950"/>
        <dbReference type="ChEBI" id="CHEBI:57287"/>
        <dbReference type="ChEBI" id="CHEBI:57379"/>
        <dbReference type="ChEBI" id="CHEBI:74151"/>
        <dbReference type="EC" id="2.3.1.225"/>
    </reaction>
</comment>
<comment type="subcellular location">
    <subcellularLocation>
        <location evidence="7">Cell membrane</location>
        <topology evidence="7">Multi-pass membrane protein</topology>
    </subcellularLocation>
</comment>
<comment type="domain">
    <text evidence="1">The DHHC domain is required for palmitoyltransferase activity.</text>
</comment>
<comment type="similarity">
    <text evidence="7">Belongs to the DHHC palmitoyltransferase family.</text>
</comment>
<comment type="sequence caution" evidence="7">
    <conflict type="erroneous gene model prediction">
        <sequence resource="EMBL-CDS" id="BAB01189"/>
    </conflict>
</comment>
<gene>
    <name type="primary">PAT07</name>
    <name type="ordered locus">At3g26935</name>
    <name type="ORF">MOJ10.1</name>
</gene>
<reference key="1">
    <citation type="journal article" date="2000" name="DNA Res.">
        <title>Structural analysis of Arabidopsis thaliana chromosome 3. II. Sequence features of the 4,251,695 bp regions covered by 90 P1, TAC and BAC clones.</title>
        <authorList>
            <person name="Kaneko T."/>
            <person name="Katoh T."/>
            <person name="Sato S."/>
            <person name="Nakamura Y."/>
            <person name="Asamizu E."/>
            <person name="Tabata S."/>
        </authorList>
    </citation>
    <scope>NUCLEOTIDE SEQUENCE [LARGE SCALE GENOMIC DNA]</scope>
    <source>
        <strain>cv. Columbia</strain>
    </source>
</reference>
<reference key="2">
    <citation type="journal article" date="2000" name="DNA Res.">
        <title>Structural analysis of Arabidopsis thaliana chromosome 3. I. Sequence features of the regions of 4,504,864 bp covered by sixty P1 and TAC clones.</title>
        <authorList>
            <person name="Sato S."/>
            <person name="Nakamura Y."/>
            <person name="Kaneko T."/>
            <person name="Katoh T."/>
            <person name="Asamizu E."/>
            <person name="Tabata S."/>
        </authorList>
    </citation>
    <scope>NUCLEOTIDE SEQUENCE [LARGE SCALE GENOMIC DNA]</scope>
    <source>
        <strain>cv. Columbia</strain>
    </source>
</reference>
<reference key="3">
    <citation type="journal article" date="2017" name="Plant J.">
        <title>Araport11: a complete reannotation of the Arabidopsis thaliana reference genome.</title>
        <authorList>
            <person name="Cheng C.Y."/>
            <person name="Krishnakumar V."/>
            <person name="Chan A.P."/>
            <person name="Thibaud-Nissen F."/>
            <person name="Schobel S."/>
            <person name="Town C.D."/>
        </authorList>
    </citation>
    <scope>GENOME REANNOTATION</scope>
    <source>
        <strain>cv. Columbia</strain>
    </source>
</reference>
<reference key="4">
    <citation type="submission" date="2006-07" db="EMBL/GenBank/DDBJ databases">
        <title>Large-scale analysis of RIKEN Arabidopsis full-length (RAFL) cDNAs.</title>
        <authorList>
            <person name="Totoki Y."/>
            <person name="Seki M."/>
            <person name="Ishida J."/>
            <person name="Nakajima M."/>
            <person name="Enju A."/>
            <person name="Kamiya A."/>
            <person name="Narusaka M."/>
            <person name="Shin-i T."/>
            <person name="Nakagawa M."/>
            <person name="Sakamoto N."/>
            <person name="Oishi K."/>
            <person name="Kohara Y."/>
            <person name="Kobayashi M."/>
            <person name="Toyoda A."/>
            <person name="Sakaki Y."/>
            <person name="Sakurai T."/>
            <person name="Iida K."/>
            <person name="Akiyama K."/>
            <person name="Satou M."/>
            <person name="Toyoda T."/>
            <person name="Konagaya A."/>
            <person name="Carninci P."/>
            <person name="Kawai J."/>
            <person name="Hayashizaki Y."/>
            <person name="Shinozaki K."/>
        </authorList>
    </citation>
    <scope>NUCLEOTIDE SEQUENCE [LARGE SCALE MRNA]</scope>
    <source>
        <strain>cv. Columbia</strain>
    </source>
</reference>
<reference key="5">
    <citation type="journal article" date="2003" name="Mol. Cell. Proteomics">
        <title>Large-scale analysis of in vivo phosphorylated membrane proteins by immobilized metal ion affinity chromatography and mass spectrometry.</title>
        <authorList>
            <person name="Nuehse T.S."/>
            <person name="Stensballe A."/>
            <person name="Jensen O.N."/>
            <person name="Peck S.C."/>
        </authorList>
    </citation>
    <scope>PHOSPHORYLATION [LARGE SCALE ANALYSIS] AT SER-377</scope>
    <scope>IDENTIFICATION BY MASS SPECTROMETRY [LARGE SCALE ANALYSIS]</scope>
    <source>
        <strain>cv. La-0</strain>
    </source>
</reference>
<reference key="6">
    <citation type="journal article" date="2004" name="Plant Cell">
        <title>Phosphoproteomics of the Arabidopsis plasma membrane and a new phosphorylation site database.</title>
        <authorList>
            <person name="Nuehse T.S."/>
            <person name="Stensballe A."/>
            <person name="Jensen O.N."/>
            <person name="Peck S.C."/>
        </authorList>
    </citation>
    <scope>PHOSPHORYLATION [LARGE SCALE ANALYSIS] AT SER-377</scope>
    <scope>IDENTIFICATION BY MASS SPECTROMETRY [LARGE SCALE ANALYSIS]</scope>
</reference>
<reference key="7">
    <citation type="book" date="2007" name="Proceedings of the 18th international conference on Arabidopsis research">
        <title>S-acylation: dynamic control of plant development and sigalling by lipid modification of proteins.</title>
        <authorList>
            <person name="Hemsley P.A."/>
            <person name="Taylor L."/>
            <person name="Grierson C.S."/>
        </authorList>
    </citation>
    <scope>GENE FAMILY</scope>
    <scope>FUNCTION</scope>
</reference>
<reference key="8">
    <citation type="journal article" date="2009" name="Plant Physiol.">
        <title>Large-scale Arabidopsis phosphoproteome profiling reveals novel chloroplast kinase substrates and phosphorylation networks.</title>
        <authorList>
            <person name="Reiland S."/>
            <person name="Messerli G."/>
            <person name="Baerenfaller K."/>
            <person name="Gerrits B."/>
            <person name="Endler A."/>
            <person name="Grossmann J."/>
            <person name="Gruissem W."/>
            <person name="Baginsky S."/>
        </authorList>
    </citation>
    <scope>PHOSPHORYLATION [LARGE SCALE ANALYSIS] AT SER-327 AND SER-377</scope>
    <scope>IDENTIFICATION BY MASS SPECTROMETRY [LARGE SCALE ANALYSIS]</scope>
</reference>
<reference key="9">
    <citation type="journal article" date="2012" name="Plant Physiol.">
        <title>Genomics and localization of the Arabidopsis DHHC-cysteine-rich domain S-acyltransferase protein family.</title>
        <authorList>
            <person name="Batistic O."/>
        </authorList>
    </citation>
    <scope>SUBCELLULAR LOCATION</scope>
    <scope>GENE FAMILY</scope>
    <scope>NOMENCLATURE</scope>
</reference>
<name>ZDHC9_ARATH</name>
<sequence>MYVVPPPQRSDSGSNGDLRVYQTWKGSNIFFLQGRFVFGPDVRSLALTICLIAVPVTIFCIFVARKLIDDFSDSWGVSIVAVAVVFTIYDLILLLLTSGRDPGIIPRNAHPPEPETLDGNMDAGAGQTPQLRLPRIKEVQLNGITFKVKYCDTCMLYRPPRCSHCSICNNCVERFDHHCPWVGQCIGMRNYRFFFMFVFSTTLLCIYVFAFCWVYIRKIMESEHTTTWKAMLKTPASIVLIIYTFISMWFVGGLTVFHLYLISTNQTTYENFRYRYDRRSNPHNKGVVNNFKETFFSTIPPSKNDFRAMVQREPPLPPRSVAGGFMSPNMGKANDEIEMGRKAVWADMGPAMSDHGDGKHGNNERLHVKDGELGELSPDIRATVDEQSDRPSMHPRRSSWGRKSGSWDMSPEVMALAARVGEQNQNGGGSSSGSGLVTENRPT</sequence>
<accession>Q0WQK2</accession>
<accession>Q9LJF4</accession>
<feature type="chain" id="PRO_0000363596" description="Probable protein S-acyltransferase 7">
    <location>
        <begin position="1"/>
        <end position="443"/>
    </location>
</feature>
<feature type="transmembrane region" description="Helical" evidence="3">
    <location>
        <begin position="44"/>
        <end position="64"/>
    </location>
</feature>
<feature type="transmembrane region" description="Helical" evidence="3">
    <location>
        <begin position="76"/>
        <end position="96"/>
    </location>
</feature>
<feature type="transmembrane region" description="Helical" evidence="3">
    <location>
        <begin position="193"/>
        <end position="213"/>
    </location>
</feature>
<feature type="transmembrane region" description="Helical" evidence="3">
    <location>
        <begin position="237"/>
        <end position="257"/>
    </location>
</feature>
<feature type="domain" description="DHHC" evidence="4">
    <location>
        <begin position="149"/>
        <end position="199"/>
    </location>
</feature>
<feature type="region of interest" description="Disordered" evidence="5">
    <location>
        <begin position="382"/>
        <end position="443"/>
    </location>
</feature>
<feature type="compositionally biased region" description="Basic and acidic residues" evidence="5">
    <location>
        <begin position="382"/>
        <end position="392"/>
    </location>
</feature>
<feature type="active site" description="S-palmitoyl cysteine intermediate" evidence="1">
    <location>
        <position position="179"/>
    </location>
</feature>
<feature type="modified residue" description="Phosphoserine" evidence="10">
    <location>
        <position position="327"/>
    </location>
</feature>
<feature type="modified residue" description="Phosphoserine" evidence="8 9 10">
    <location>
        <position position="377"/>
    </location>
</feature>
<feature type="modified residue" description="Phosphoserine" evidence="2">
    <location>
        <position position="406"/>
    </location>
</feature>
<keyword id="KW-0012">Acyltransferase</keyword>
<keyword id="KW-1003">Cell membrane</keyword>
<keyword id="KW-0449">Lipoprotein</keyword>
<keyword id="KW-0472">Membrane</keyword>
<keyword id="KW-0564">Palmitate</keyword>
<keyword id="KW-0597">Phosphoprotein</keyword>
<keyword id="KW-1185">Reference proteome</keyword>
<keyword id="KW-0808">Transferase</keyword>
<keyword id="KW-0812">Transmembrane</keyword>
<keyword id="KW-1133">Transmembrane helix</keyword>